<evidence type="ECO:0000255" key="1">
    <source>
        <dbReference type="HAMAP-Rule" id="MF_00686"/>
    </source>
</evidence>
<feature type="chain" id="PRO_0000246105" description="Probable Fe(2+)-trafficking protein">
    <location>
        <begin position="1"/>
        <end position="90"/>
    </location>
</feature>
<keyword id="KW-0408">Iron</keyword>
<keyword id="KW-1185">Reference proteome</keyword>
<gene>
    <name type="ordered locus">PSHAa0555</name>
</gene>
<organism>
    <name type="scientific">Pseudoalteromonas translucida (strain TAC 125)</name>
    <dbReference type="NCBI Taxonomy" id="326442"/>
    <lineage>
        <taxon>Bacteria</taxon>
        <taxon>Pseudomonadati</taxon>
        <taxon>Pseudomonadota</taxon>
        <taxon>Gammaproteobacteria</taxon>
        <taxon>Alteromonadales</taxon>
        <taxon>Pseudoalteromonadaceae</taxon>
        <taxon>Pseudoalteromonas</taxon>
    </lineage>
</organism>
<reference key="1">
    <citation type="journal article" date="2005" name="Genome Res.">
        <title>Coping with cold: the genome of the versatile marine Antarctica bacterium Pseudoalteromonas haloplanktis TAC125.</title>
        <authorList>
            <person name="Medigue C."/>
            <person name="Krin E."/>
            <person name="Pascal G."/>
            <person name="Barbe V."/>
            <person name="Bernsel A."/>
            <person name="Bertin P.N."/>
            <person name="Cheung F."/>
            <person name="Cruveiller S."/>
            <person name="D'Amico S."/>
            <person name="Duilio A."/>
            <person name="Fang G."/>
            <person name="Feller G."/>
            <person name="Ho C."/>
            <person name="Mangenot S."/>
            <person name="Marino G."/>
            <person name="Nilsson J."/>
            <person name="Parrilli E."/>
            <person name="Rocha E.P.C."/>
            <person name="Rouy Z."/>
            <person name="Sekowska A."/>
            <person name="Tutino M.L."/>
            <person name="Vallenet D."/>
            <person name="von Heijne G."/>
            <person name="Danchin A."/>
        </authorList>
    </citation>
    <scope>NUCLEOTIDE SEQUENCE [LARGE SCALE GENOMIC DNA]</scope>
    <source>
        <strain>TAC 125</strain>
    </source>
</reference>
<dbReference type="EMBL" id="CR954246">
    <property type="protein sequence ID" value="CAI85643.1"/>
    <property type="molecule type" value="Genomic_DNA"/>
</dbReference>
<dbReference type="SMR" id="Q3ILI9"/>
<dbReference type="STRING" id="326442.PSHAa0555"/>
<dbReference type="KEGG" id="pha:PSHAa0555"/>
<dbReference type="PATRIC" id="fig|326442.8.peg.524"/>
<dbReference type="eggNOG" id="COG2924">
    <property type="taxonomic scope" value="Bacteria"/>
</dbReference>
<dbReference type="HOGENOM" id="CLU_170994_0_0_6"/>
<dbReference type="BioCyc" id="PHAL326442:PSHA_RS02705-MONOMER"/>
<dbReference type="Proteomes" id="UP000006843">
    <property type="component" value="Chromosome I"/>
</dbReference>
<dbReference type="GO" id="GO:0005829">
    <property type="term" value="C:cytosol"/>
    <property type="evidence" value="ECO:0007669"/>
    <property type="project" value="TreeGrafter"/>
</dbReference>
<dbReference type="GO" id="GO:0005506">
    <property type="term" value="F:iron ion binding"/>
    <property type="evidence" value="ECO:0007669"/>
    <property type="project" value="UniProtKB-UniRule"/>
</dbReference>
<dbReference type="GO" id="GO:0034599">
    <property type="term" value="P:cellular response to oxidative stress"/>
    <property type="evidence" value="ECO:0007669"/>
    <property type="project" value="TreeGrafter"/>
</dbReference>
<dbReference type="FunFam" id="1.10.3880.10:FF:000001">
    <property type="entry name" value="Probable Fe(2+)-trafficking protein"/>
    <property type="match status" value="1"/>
</dbReference>
<dbReference type="Gene3D" id="1.10.3880.10">
    <property type="entry name" value="Fe(II) trafficking protein YggX"/>
    <property type="match status" value="1"/>
</dbReference>
<dbReference type="HAMAP" id="MF_00686">
    <property type="entry name" value="Fe_traffic_YggX"/>
    <property type="match status" value="1"/>
</dbReference>
<dbReference type="InterPro" id="IPR007457">
    <property type="entry name" value="Fe_traffick_prot_YggX"/>
</dbReference>
<dbReference type="InterPro" id="IPR036766">
    <property type="entry name" value="Fe_traffick_prot_YggX_sf"/>
</dbReference>
<dbReference type="NCBIfam" id="NF003817">
    <property type="entry name" value="PRK05408.1"/>
    <property type="match status" value="1"/>
</dbReference>
<dbReference type="PANTHER" id="PTHR36965">
    <property type="entry name" value="FE(2+)-TRAFFICKING PROTEIN-RELATED"/>
    <property type="match status" value="1"/>
</dbReference>
<dbReference type="PANTHER" id="PTHR36965:SF1">
    <property type="entry name" value="FE(2+)-TRAFFICKING PROTEIN-RELATED"/>
    <property type="match status" value="1"/>
</dbReference>
<dbReference type="Pfam" id="PF04362">
    <property type="entry name" value="Iron_traffic"/>
    <property type="match status" value="1"/>
</dbReference>
<dbReference type="PIRSF" id="PIRSF029827">
    <property type="entry name" value="Fe_traffic_YggX"/>
    <property type="match status" value="1"/>
</dbReference>
<dbReference type="SUPFAM" id="SSF111148">
    <property type="entry name" value="YggX-like"/>
    <property type="match status" value="1"/>
</dbReference>
<comment type="function">
    <text evidence="1">Could be a mediator in iron transactions between iron acquisition and iron-requiring processes, such as synthesis and/or repair of Fe-S clusters in biosynthetic enzymes.</text>
</comment>
<comment type="similarity">
    <text evidence="1">Belongs to the Fe(2+)-trafficking protein family.</text>
</comment>
<accession>Q3ILI9</accession>
<protein>
    <recommendedName>
        <fullName evidence="1">Probable Fe(2+)-trafficking protein</fullName>
    </recommendedName>
</protein>
<proteinExistence type="inferred from homology"/>
<sequence length="90" mass="10672">MARTVFCQKLQKEAEGLGFQLYPGEIGEKIFNNISKEAWAQWQHKQTMLINEKHLNMMDPEHRSFLEQQMVGFLFENKEVEIEGYKPPEK</sequence>
<name>FETP_PSET1</name>